<evidence type="ECO:0000255" key="1">
    <source>
        <dbReference type="HAMAP-Rule" id="MF_01309"/>
    </source>
</evidence>
<evidence type="ECO:0000305" key="2"/>
<feature type="chain" id="PRO_0000293841" description="Small ribosomal subunit protein uS3">
    <location>
        <begin position="1"/>
        <end position="215"/>
    </location>
</feature>
<feature type="domain" description="KH type-2" evidence="1">
    <location>
        <begin position="39"/>
        <end position="107"/>
    </location>
</feature>
<protein>
    <recommendedName>
        <fullName evidence="1">Small ribosomal subunit protein uS3</fullName>
    </recommendedName>
    <alternativeName>
        <fullName evidence="2">30S ribosomal protein S3</fullName>
    </alternativeName>
</protein>
<dbReference type="EMBL" id="CP000450">
    <property type="protein sequence ID" value="ABI58837.1"/>
    <property type="molecule type" value="Genomic_DNA"/>
</dbReference>
<dbReference type="SMR" id="Q0AII9"/>
<dbReference type="STRING" id="335283.Neut_0564"/>
<dbReference type="KEGG" id="net:Neut_0564"/>
<dbReference type="eggNOG" id="COG0092">
    <property type="taxonomic scope" value="Bacteria"/>
</dbReference>
<dbReference type="HOGENOM" id="CLU_058591_0_2_4"/>
<dbReference type="OrthoDB" id="9806396at2"/>
<dbReference type="Proteomes" id="UP000001966">
    <property type="component" value="Chromosome"/>
</dbReference>
<dbReference type="GO" id="GO:0022627">
    <property type="term" value="C:cytosolic small ribosomal subunit"/>
    <property type="evidence" value="ECO:0007669"/>
    <property type="project" value="TreeGrafter"/>
</dbReference>
<dbReference type="GO" id="GO:0003729">
    <property type="term" value="F:mRNA binding"/>
    <property type="evidence" value="ECO:0007669"/>
    <property type="project" value="UniProtKB-UniRule"/>
</dbReference>
<dbReference type="GO" id="GO:0019843">
    <property type="term" value="F:rRNA binding"/>
    <property type="evidence" value="ECO:0007669"/>
    <property type="project" value="UniProtKB-UniRule"/>
</dbReference>
<dbReference type="GO" id="GO:0003735">
    <property type="term" value="F:structural constituent of ribosome"/>
    <property type="evidence" value="ECO:0007669"/>
    <property type="project" value="InterPro"/>
</dbReference>
<dbReference type="GO" id="GO:0006412">
    <property type="term" value="P:translation"/>
    <property type="evidence" value="ECO:0007669"/>
    <property type="project" value="UniProtKB-UniRule"/>
</dbReference>
<dbReference type="CDD" id="cd02412">
    <property type="entry name" value="KH-II_30S_S3"/>
    <property type="match status" value="1"/>
</dbReference>
<dbReference type="FunFam" id="3.30.1140.32:FF:000002">
    <property type="entry name" value="30S ribosomal protein S3"/>
    <property type="match status" value="1"/>
</dbReference>
<dbReference type="FunFam" id="3.30.300.20:FF:000001">
    <property type="entry name" value="30S ribosomal protein S3"/>
    <property type="match status" value="1"/>
</dbReference>
<dbReference type="Gene3D" id="3.30.300.20">
    <property type="match status" value="1"/>
</dbReference>
<dbReference type="Gene3D" id="3.30.1140.32">
    <property type="entry name" value="Ribosomal protein S3, C-terminal domain"/>
    <property type="match status" value="1"/>
</dbReference>
<dbReference type="HAMAP" id="MF_01309_B">
    <property type="entry name" value="Ribosomal_uS3_B"/>
    <property type="match status" value="1"/>
</dbReference>
<dbReference type="InterPro" id="IPR004087">
    <property type="entry name" value="KH_dom"/>
</dbReference>
<dbReference type="InterPro" id="IPR015946">
    <property type="entry name" value="KH_dom-like_a/b"/>
</dbReference>
<dbReference type="InterPro" id="IPR004044">
    <property type="entry name" value="KH_dom_type_2"/>
</dbReference>
<dbReference type="InterPro" id="IPR009019">
    <property type="entry name" value="KH_sf_prok-type"/>
</dbReference>
<dbReference type="InterPro" id="IPR036419">
    <property type="entry name" value="Ribosomal_S3_C_sf"/>
</dbReference>
<dbReference type="InterPro" id="IPR005704">
    <property type="entry name" value="Ribosomal_uS3_bac-typ"/>
</dbReference>
<dbReference type="InterPro" id="IPR001351">
    <property type="entry name" value="Ribosomal_uS3_C"/>
</dbReference>
<dbReference type="InterPro" id="IPR018280">
    <property type="entry name" value="Ribosomal_uS3_CS"/>
</dbReference>
<dbReference type="NCBIfam" id="TIGR01009">
    <property type="entry name" value="rpsC_bact"/>
    <property type="match status" value="1"/>
</dbReference>
<dbReference type="PANTHER" id="PTHR11760">
    <property type="entry name" value="30S/40S RIBOSOMAL PROTEIN S3"/>
    <property type="match status" value="1"/>
</dbReference>
<dbReference type="PANTHER" id="PTHR11760:SF19">
    <property type="entry name" value="SMALL RIBOSOMAL SUBUNIT PROTEIN US3C"/>
    <property type="match status" value="1"/>
</dbReference>
<dbReference type="Pfam" id="PF07650">
    <property type="entry name" value="KH_2"/>
    <property type="match status" value="1"/>
</dbReference>
<dbReference type="Pfam" id="PF00189">
    <property type="entry name" value="Ribosomal_S3_C"/>
    <property type="match status" value="1"/>
</dbReference>
<dbReference type="SMART" id="SM00322">
    <property type="entry name" value="KH"/>
    <property type="match status" value="1"/>
</dbReference>
<dbReference type="SUPFAM" id="SSF54814">
    <property type="entry name" value="Prokaryotic type KH domain (KH-domain type II)"/>
    <property type="match status" value="1"/>
</dbReference>
<dbReference type="SUPFAM" id="SSF54821">
    <property type="entry name" value="Ribosomal protein S3 C-terminal domain"/>
    <property type="match status" value="1"/>
</dbReference>
<dbReference type="PROSITE" id="PS50823">
    <property type="entry name" value="KH_TYPE_2"/>
    <property type="match status" value="1"/>
</dbReference>
<dbReference type="PROSITE" id="PS00548">
    <property type="entry name" value="RIBOSOMAL_S3"/>
    <property type="match status" value="1"/>
</dbReference>
<comment type="function">
    <text evidence="1">Binds the lower part of the 30S subunit head. Binds mRNA in the 70S ribosome, positioning it for translation.</text>
</comment>
<comment type="subunit">
    <text evidence="1">Part of the 30S ribosomal subunit. Forms a tight complex with proteins S10 and S14.</text>
</comment>
<comment type="similarity">
    <text evidence="1">Belongs to the universal ribosomal protein uS3 family.</text>
</comment>
<proteinExistence type="inferred from homology"/>
<sequence>MGQKINPTGFRLSVLKNWSSRWYANTKKFSVFLNEDINVRQYLQKRLAHASVGSIIIERPSRNAKITIHTSRPGVVIGKKGEDIEILRKNVEKLMNVPVHINIEEIRKPEIDAQLIAASITQQLEKRIMFRRAMKRAIQNAMRLGAQGIKIMSSGRLNGIEIARTEWYREGRVPLHTLRAEVDYGTSEAKTTYGVIGVKVWVFKGEQLSVRDRQN</sequence>
<reference key="1">
    <citation type="journal article" date="2007" name="Environ. Microbiol.">
        <title>Whole-genome analysis of the ammonia-oxidizing bacterium, Nitrosomonas eutropha C91: implications for niche adaptation.</title>
        <authorList>
            <person name="Stein L.Y."/>
            <person name="Arp D.J."/>
            <person name="Berube P.M."/>
            <person name="Chain P.S."/>
            <person name="Hauser L."/>
            <person name="Jetten M.S."/>
            <person name="Klotz M.G."/>
            <person name="Larimer F.W."/>
            <person name="Norton J.M."/>
            <person name="Op den Camp H.J.M."/>
            <person name="Shin M."/>
            <person name="Wei X."/>
        </authorList>
    </citation>
    <scope>NUCLEOTIDE SEQUENCE [LARGE SCALE GENOMIC DNA]</scope>
    <source>
        <strain>DSM 101675 / C91 / Nm57</strain>
    </source>
</reference>
<keyword id="KW-0687">Ribonucleoprotein</keyword>
<keyword id="KW-0689">Ribosomal protein</keyword>
<keyword id="KW-0694">RNA-binding</keyword>
<keyword id="KW-0699">rRNA-binding</keyword>
<name>RS3_NITEC</name>
<organism>
    <name type="scientific">Nitrosomonas eutropha (strain DSM 101675 / C91 / Nm57)</name>
    <dbReference type="NCBI Taxonomy" id="335283"/>
    <lineage>
        <taxon>Bacteria</taxon>
        <taxon>Pseudomonadati</taxon>
        <taxon>Pseudomonadota</taxon>
        <taxon>Betaproteobacteria</taxon>
        <taxon>Nitrosomonadales</taxon>
        <taxon>Nitrosomonadaceae</taxon>
        <taxon>Nitrosomonas</taxon>
    </lineage>
</organism>
<gene>
    <name evidence="1" type="primary">rpsC</name>
    <name type="ordered locus">Neut_0564</name>
</gene>
<accession>Q0AII9</accession>